<proteinExistence type="evidence at protein level"/>
<gene>
    <name type="primary">Nampt</name>
    <name type="synonym">Pbef1</name>
</gene>
<dbReference type="EC" id="2.4.2.12" evidence="3 4"/>
<dbReference type="EMBL" id="AY679720">
    <property type="protein sequence ID" value="AAT72933.1"/>
    <property type="molecule type" value="mRNA"/>
</dbReference>
<dbReference type="EMBL" id="AF234625">
    <property type="protein sequence ID" value="AAF43208.1"/>
    <property type="molecule type" value="mRNA"/>
</dbReference>
<dbReference type="EMBL" id="BC004059">
    <property type="protein sequence ID" value="AAH04059.1"/>
    <property type="molecule type" value="mRNA"/>
</dbReference>
<dbReference type="EMBL" id="BC018358">
    <property type="protein sequence ID" value="AAH18358.1"/>
    <property type="molecule type" value="mRNA"/>
</dbReference>
<dbReference type="EMBL" id="AK086415">
    <property type="protein sequence ID" value="BAC39664.1"/>
    <property type="molecule type" value="mRNA"/>
</dbReference>
<dbReference type="CCDS" id="CCDS25871.1"/>
<dbReference type="RefSeq" id="NP_067499.2">
    <property type="nucleotide sequence ID" value="NM_021524.2"/>
</dbReference>
<dbReference type="PDB" id="2GVL">
    <property type="method" value="X-ray"/>
    <property type="resolution" value="2.10 A"/>
    <property type="chains" value="A/B=1-491"/>
</dbReference>
<dbReference type="PDB" id="2H3B">
    <property type="method" value="X-ray"/>
    <property type="resolution" value="1.95 A"/>
    <property type="chains" value="A/B=1-491"/>
</dbReference>
<dbReference type="PDB" id="2H3D">
    <property type="method" value="X-ray"/>
    <property type="resolution" value="2.10 A"/>
    <property type="chains" value="A/B=1-491"/>
</dbReference>
<dbReference type="PDB" id="7Q8T">
    <property type="method" value="X-ray"/>
    <property type="resolution" value="2.15 A"/>
    <property type="chains" value="A/B=1-491"/>
</dbReference>
<dbReference type="PDBsum" id="2GVL"/>
<dbReference type="PDBsum" id="2H3B"/>
<dbReference type="PDBsum" id="2H3D"/>
<dbReference type="PDBsum" id="7Q8T"/>
<dbReference type="SMR" id="Q99KQ4"/>
<dbReference type="BioGRID" id="208494">
    <property type="interactions" value="24"/>
</dbReference>
<dbReference type="DIP" id="DIP-29217N"/>
<dbReference type="FunCoup" id="Q99KQ4">
    <property type="interactions" value="2578"/>
</dbReference>
<dbReference type="IntAct" id="Q99KQ4">
    <property type="interactions" value="1"/>
</dbReference>
<dbReference type="STRING" id="10090.ENSMUSP00000020886"/>
<dbReference type="BindingDB" id="Q99KQ4"/>
<dbReference type="ChEMBL" id="CHEMBL3259474"/>
<dbReference type="GlyGen" id="Q99KQ4">
    <property type="glycosylation" value="1 site, 1 O-linked glycan (1 site)"/>
</dbReference>
<dbReference type="iPTMnet" id="Q99KQ4"/>
<dbReference type="PhosphoSitePlus" id="Q99KQ4"/>
<dbReference type="SwissPalm" id="Q99KQ4"/>
<dbReference type="jPOST" id="Q99KQ4"/>
<dbReference type="PaxDb" id="10090-ENSMUSP00000020886"/>
<dbReference type="PeptideAtlas" id="Q99KQ4"/>
<dbReference type="ProteomicsDB" id="293629"/>
<dbReference type="Pumba" id="Q99KQ4"/>
<dbReference type="Antibodypedia" id="17123">
    <property type="antibodies" value="997 antibodies from 44 providers"/>
</dbReference>
<dbReference type="DNASU" id="59027"/>
<dbReference type="Ensembl" id="ENSMUST00000020886.9">
    <property type="protein sequence ID" value="ENSMUSP00000020886.8"/>
    <property type="gene ID" value="ENSMUSG00000020572.9"/>
</dbReference>
<dbReference type="GeneID" id="59027"/>
<dbReference type="KEGG" id="mmu:59027"/>
<dbReference type="UCSC" id="uc007nif.2">
    <property type="organism name" value="mouse"/>
</dbReference>
<dbReference type="AGR" id="MGI:1929865"/>
<dbReference type="CTD" id="10135"/>
<dbReference type="MGI" id="MGI:1929865">
    <property type="gene designation" value="Nampt"/>
</dbReference>
<dbReference type="VEuPathDB" id="HostDB:ENSMUSG00000020572"/>
<dbReference type="eggNOG" id="ENOG502QSGN">
    <property type="taxonomic scope" value="Eukaryota"/>
</dbReference>
<dbReference type="GeneTree" id="ENSGT00940000153456"/>
<dbReference type="HOGENOM" id="CLU_012550_2_0_1"/>
<dbReference type="InParanoid" id="Q99KQ4"/>
<dbReference type="OMA" id="TFGFAMK"/>
<dbReference type="OrthoDB" id="193380at2759"/>
<dbReference type="PhylomeDB" id="Q99KQ4"/>
<dbReference type="TreeFam" id="TF333530"/>
<dbReference type="BRENDA" id="2.4.2.12">
    <property type="organism ID" value="3474"/>
</dbReference>
<dbReference type="Reactome" id="R-MMU-197264">
    <property type="pathway name" value="Nicotinamide salvaging"/>
</dbReference>
<dbReference type="SABIO-RK" id="Q99KQ4"/>
<dbReference type="UniPathway" id="UPA00253">
    <property type="reaction ID" value="UER00890"/>
</dbReference>
<dbReference type="BioGRID-ORCS" id="59027">
    <property type="hits" value="22 hits in 82 CRISPR screens"/>
</dbReference>
<dbReference type="ChiTaRS" id="Nampt">
    <property type="organism name" value="mouse"/>
</dbReference>
<dbReference type="EvolutionaryTrace" id="Q99KQ4"/>
<dbReference type="PRO" id="PR:Q99KQ4"/>
<dbReference type="Proteomes" id="UP000000589">
    <property type="component" value="Chromosome 12"/>
</dbReference>
<dbReference type="RNAct" id="Q99KQ4">
    <property type="molecule type" value="protein"/>
</dbReference>
<dbReference type="Bgee" id="ENSMUSG00000020572">
    <property type="expression patterns" value="Expressed in gastrula and 279 other cell types or tissues"/>
</dbReference>
<dbReference type="ExpressionAtlas" id="Q99KQ4">
    <property type="expression patterns" value="baseline and differential"/>
</dbReference>
<dbReference type="GO" id="GO:0030054">
    <property type="term" value="C:cell junction"/>
    <property type="evidence" value="ECO:0007669"/>
    <property type="project" value="Ensembl"/>
</dbReference>
<dbReference type="GO" id="GO:0005737">
    <property type="term" value="C:cytoplasm"/>
    <property type="evidence" value="ECO:0000314"/>
    <property type="project" value="MGI"/>
</dbReference>
<dbReference type="GO" id="GO:0005829">
    <property type="term" value="C:cytosol"/>
    <property type="evidence" value="ECO:0000314"/>
    <property type="project" value="MGI"/>
</dbReference>
<dbReference type="GO" id="GO:0005615">
    <property type="term" value="C:extracellular space"/>
    <property type="evidence" value="ECO:0007669"/>
    <property type="project" value="UniProtKB-KW"/>
</dbReference>
<dbReference type="GO" id="GO:0005759">
    <property type="term" value="C:mitochondrial matrix"/>
    <property type="evidence" value="ECO:0000314"/>
    <property type="project" value="MGI"/>
</dbReference>
<dbReference type="GO" id="GO:0016607">
    <property type="term" value="C:nuclear speck"/>
    <property type="evidence" value="ECO:0007669"/>
    <property type="project" value="Ensembl"/>
</dbReference>
<dbReference type="GO" id="GO:0005125">
    <property type="term" value="F:cytokine activity"/>
    <property type="evidence" value="ECO:0007669"/>
    <property type="project" value="UniProtKB-KW"/>
</dbReference>
<dbReference type="GO" id="GO:0042802">
    <property type="term" value="F:identical protein binding"/>
    <property type="evidence" value="ECO:0000353"/>
    <property type="project" value="IntAct"/>
</dbReference>
<dbReference type="GO" id="GO:0047280">
    <property type="term" value="F:nicotinamide phosphoribosyltransferase activity"/>
    <property type="evidence" value="ECO:0000314"/>
    <property type="project" value="MGI"/>
</dbReference>
<dbReference type="GO" id="GO:0032922">
    <property type="term" value="P:circadian regulation of gene expression"/>
    <property type="evidence" value="ECO:0000315"/>
    <property type="project" value="UniProtKB"/>
</dbReference>
<dbReference type="GO" id="GO:0007623">
    <property type="term" value="P:circadian rhythm"/>
    <property type="evidence" value="ECO:0000270"/>
    <property type="project" value="UniProtKB"/>
</dbReference>
<dbReference type="GO" id="GO:0006954">
    <property type="term" value="P:inflammatory response"/>
    <property type="evidence" value="ECO:0007669"/>
    <property type="project" value="Ensembl"/>
</dbReference>
<dbReference type="GO" id="GO:0009435">
    <property type="term" value="P:NAD biosynthetic process"/>
    <property type="evidence" value="ECO:0000314"/>
    <property type="project" value="MGI"/>
</dbReference>
<dbReference type="GO" id="GO:0034355">
    <property type="term" value="P:NAD biosynthetic process via the salvage pathway"/>
    <property type="evidence" value="ECO:0000314"/>
    <property type="project" value="MGI"/>
</dbReference>
<dbReference type="GO" id="GO:0006741">
    <property type="term" value="P:NADP biosynthetic process"/>
    <property type="evidence" value="ECO:0000314"/>
    <property type="project" value="MGI"/>
</dbReference>
<dbReference type="GO" id="GO:0006769">
    <property type="term" value="P:nicotinamide metabolic process"/>
    <property type="evidence" value="ECO:0000314"/>
    <property type="project" value="MGI"/>
</dbReference>
<dbReference type="GO" id="GO:0043123">
    <property type="term" value="P:positive regulation of canonical NF-kappaB signal transduction"/>
    <property type="evidence" value="ECO:0007669"/>
    <property type="project" value="Ensembl"/>
</dbReference>
<dbReference type="GO" id="GO:0070374">
    <property type="term" value="P:positive regulation of ERK1 and ERK2 cascade"/>
    <property type="evidence" value="ECO:0007669"/>
    <property type="project" value="Ensembl"/>
</dbReference>
<dbReference type="GO" id="GO:0010628">
    <property type="term" value="P:positive regulation of gene expression"/>
    <property type="evidence" value="ECO:0007669"/>
    <property type="project" value="Ensembl"/>
</dbReference>
<dbReference type="GO" id="GO:0045944">
    <property type="term" value="P:positive regulation of transcription by RNA polymerase II"/>
    <property type="evidence" value="ECO:0007669"/>
    <property type="project" value="Ensembl"/>
</dbReference>
<dbReference type="CDD" id="cd01569">
    <property type="entry name" value="PBEF_like"/>
    <property type="match status" value="1"/>
</dbReference>
<dbReference type="FunFam" id="3.20.20.70:FF:000080">
    <property type="entry name" value="Nicotinamide phosphoribosyltransferase"/>
    <property type="match status" value="1"/>
</dbReference>
<dbReference type="Gene3D" id="3.20.20.70">
    <property type="entry name" value="Aldolase class I"/>
    <property type="match status" value="1"/>
</dbReference>
<dbReference type="InterPro" id="IPR013785">
    <property type="entry name" value="Aldolase_TIM"/>
</dbReference>
<dbReference type="InterPro" id="IPR041529">
    <property type="entry name" value="DUF5598"/>
</dbReference>
<dbReference type="InterPro" id="IPR041525">
    <property type="entry name" value="N/Namide_PRibTrfase"/>
</dbReference>
<dbReference type="InterPro" id="IPR016471">
    <property type="entry name" value="Nicotinamide_PRibTrfase"/>
</dbReference>
<dbReference type="InterPro" id="IPR036068">
    <property type="entry name" value="Nicotinate_pribotase-like_C"/>
</dbReference>
<dbReference type="NCBIfam" id="NF006629">
    <property type="entry name" value="PRK09198.1"/>
    <property type="match status" value="1"/>
</dbReference>
<dbReference type="PANTHER" id="PTHR43816">
    <property type="entry name" value="NICOTINAMIDE PHOSPHORIBOSYLTRANSFERASE"/>
    <property type="match status" value="1"/>
</dbReference>
<dbReference type="PANTHER" id="PTHR43816:SF1">
    <property type="entry name" value="NICOTINAMIDE PHOSPHORIBOSYLTRANSFERASE"/>
    <property type="match status" value="1"/>
</dbReference>
<dbReference type="Pfam" id="PF18127">
    <property type="entry name" value="NAMPT_N"/>
    <property type="match status" value="1"/>
</dbReference>
<dbReference type="Pfam" id="PF04095">
    <property type="entry name" value="NAPRTase"/>
    <property type="match status" value="1"/>
</dbReference>
<dbReference type="PIRSF" id="PIRSF005943">
    <property type="entry name" value="NMPRT"/>
    <property type="match status" value="1"/>
</dbReference>
<dbReference type="SUPFAM" id="SSF51690">
    <property type="entry name" value="Nicotinate/Quinolinate PRTase C-terminal domain-like"/>
    <property type="match status" value="1"/>
</dbReference>
<accession>Q99KQ4</accession>
<accession>Q8C3B5</accession>
<accession>Q9JKM0</accession>
<keyword id="KW-0002">3D-structure</keyword>
<keyword id="KW-0007">Acetylation</keyword>
<keyword id="KW-0090">Biological rhythms</keyword>
<keyword id="KW-0202">Cytokine</keyword>
<keyword id="KW-0963">Cytoplasm</keyword>
<keyword id="KW-0328">Glycosyltransferase</keyword>
<keyword id="KW-0539">Nucleus</keyword>
<keyword id="KW-0597">Phosphoprotein</keyword>
<keyword id="KW-0662">Pyridine nucleotide biosynthesis</keyword>
<keyword id="KW-1185">Reference proteome</keyword>
<keyword id="KW-0964">Secreted</keyword>
<keyword id="KW-0808">Transferase</keyword>
<sequence>MNAAAEAEFNILLATDSYKVTHYKQYPPNTSKVYSYFECREKKTENSKVRKVKYEETVFYGLQYILNKYLKGKVVTKEKIQEAKEVYREHFQDDVFNERGWNYILEKYDGHLPIEVKAVPEGSVIPRGNVLFTVENTDPECYWLTNWIETILVQSWYPITVATNSREQKKILAKYLLETSGNLDGLEYKLHDFGYRGVSSQETAGIGASAHLVNFKGTDTVAGIALIKKYYGTKDPVPGYSVPAAEHSTITAWGKDHEKDAFEHIVTQFSSVPVSVVSDSYDIYNACEKIWGEDLRHLIVSRSTEAPLIIRPDSGNPLDTVLKVLDILGKKFPVTENSKGYKLLPPYLRVIQGDGVDINTLQEIVEGMKQKKWSIENVSFGSGGALLQKLTRDLLNCSFKCSYVVTNGLGVNVFKDPVADPNKRSKKGRLSLHRTPAGNFVTLEEGKGDLEEYGHDLLHTVFKNGKVTKSYSFDEVRKNAQLNIEQDVAPH</sequence>
<protein>
    <recommendedName>
        <fullName>Nicotinamide phosphoribosyltransferase</fullName>
        <shortName>NAmPRTase</shortName>
        <shortName>Nampt</shortName>
        <ecNumber evidence="3 4">2.4.2.12</ecNumber>
    </recommendedName>
    <alternativeName>
        <fullName>Pre-B-cell colony-enhancing factor 1 homolog</fullName>
        <shortName>PBEF</shortName>
    </alternativeName>
    <alternativeName>
        <fullName>Visfatin</fullName>
    </alternativeName>
</protein>
<comment type="function">
    <text evidence="2 3 4 7 8">The secreted form behaves both as a cytokine with immunomodulating properties and an adipokine with anti-diabetic properties, it has no enzymatic activity, partly because of lack of activation by ATP, which has a low level in extracellular space and plasma (By similarity). Catalyzes the condensation of nicotinamide with 5-phosphoribosyl-1-pyrophosphate to yield nicotinamide mononucleotide, an intermediate in the biosynthesis of NAD. It is the rate limiting component in the mammalian NAD biosynthesis pathway. Plays a role in the modulation of circadian clock function. NAMPT-dependent oscillatory production of NAD regulates oscillation of clock target gene expression by releasing the core clock component: CLOCK-BMAL1 heterodimer from NAD-dependent SIRT1-mediated suppression.</text>
</comment>
<comment type="catalytic activity">
    <reaction evidence="3 4">
        <text>beta-nicotinamide D-ribonucleotide + diphosphate = 5-phospho-alpha-D-ribose 1-diphosphate + nicotinamide + H(+)</text>
        <dbReference type="Rhea" id="RHEA:16149"/>
        <dbReference type="ChEBI" id="CHEBI:14649"/>
        <dbReference type="ChEBI" id="CHEBI:15378"/>
        <dbReference type="ChEBI" id="CHEBI:17154"/>
        <dbReference type="ChEBI" id="CHEBI:33019"/>
        <dbReference type="ChEBI" id="CHEBI:58017"/>
        <dbReference type="EC" id="2.4.2.12"/>
    </reaction>
    <physiologicalReaction direction="right-to-left" evidence="3 4">
        <dbReference type="Rhea" id="RHEA:16151"/>
    </physiologicalReaction>
</comment>
<comment type="biophysicochemical properties">
    <kinetics>
        <KM evidence="3 4">0.92 uM for nicotinamide</KM>
        <Vmax evidence="3 4">0.021 umol/min/mg enzyme</Vmax>
    </kinetics>
</comment>
<comment type="pathway">
    <text>Cofactor biosynthesis; NAD(+) biosynthesis; nicotinamide D-ribonucleotide from 5-phospho-alpha-D-ribose 1-diphosphate and nicotinamide: step 1/1.</text>
</comment>
<comment type="subunit">
    <text evidence="5 6">Homodimer.</text>
</comment>
<comment type="interaction">
    <interactant intactId="EBI-8316571">
        <id>Q99KQ4</id>
    </interactant>
    <interactant intactId="EBI-8316571">
        <id>Q99KQ4</id>
        <label>Nampt</label>
    </interactant>
    <organismsDiffer>false</organismsDiffer>
    <experiments>4</experiments>
</comment>
<comment type="subcellular location">
    <subcellularLocation>
        <location evidence="2">Nucleus</location>
    </subcellularLocation>
    <subcellularLocation>
        <location evidence="3">Cytoplasm</location>
    </subcellularLocation>
    <subcellularLocation>
        <location evidence="2">Secreted</location>
    </subcellularLocation>
    <text evidence="2">Under non-inflammatory conditions, visfatin predominantly exhibits a granular pattern within the nucleus. Secreted by endothelial cells upon IL-1beta stimulation. Abundantly secreted in milk, reaching 100-fold higher concentrations compared to maternal serum.</text>
</comment>
<comment type="tissue specificity">
    <text evidence="3">Ubiquitously expressed in lymphoid and non-lymphoid tissues.</text>
</comment>
<comment type="induction">
    <text evidence="3 8">Expression shows a diurnal pattern of oscillation across the 24-hour light-dark cycle in liver, with a reduction in levels before the onset of the dark period (at protein level). Expression shows a diurnal pattern of oscillation in white adipose tissue (WAT), peaking at the beginning of the dark period. Up-regulated during polyclonal immune responses.</text>
</comment>
<comment type="similarity">
    <text evidence="9">Belongs to the NAPRTase family.</text>
</comment>
<organism>
    <name type="scientific">Mus musculus</name>
    <name type="common">Mouse</name>
    <dbReference type="NCBI Taxonomy" id="10090"/>
    <lineage>
        <taxon>Eukaryota</taxon>
        <taxon>Metazoa</taxon>
        <taxon>Chordata</taxon>
        <taxon>Craniata</taxon>
        <taxon>Vertebrata</taxon>
        <taxon>Euteleostomi</taxon>
        <taxon>Mammalia</taxon>
        <taxon>Eutheria</taxon>
        <taxon>Euarchontoglires</taxon>
        <taxon>Glires</taxon>
        <taxon>Rodentia</taxon>
        <taxon>Myomorpha</taxon>
        <taxon>Muroidea</taxon>
        <taxon>Muridae</taxon>
        <taxon>Murinae</taxon>
        <taxon>Mus</taxon>
        <taxon>Mus</taxon>
    </lineage>
</organism>
<evidence type="ECO:0000250" key="1"/>
<evidence type="ECO:0000250" key="2">
    <source>
        <dbReference type="UniProtKB" id="P43490"/>
    </source>
</evidence>
<evidence type="ECO:0000269" key="3">
    <source>
    </source>
</evidence>
<evidence type="ECO:0000269" key="4">
    <source>
    </source>
</evidence>
<evidence type="ECO:0000269" key="5">
    <source>
    </source>
</evidence>
<evidence type="ECO:0000269" key="6">
    <source>
    </source>
</evidence>
<evidence type="ECO:0000269" key="7">
    <source>
    </source>
</evidence>
<evidence type="ECO:0000269" key="8">
    <source>
    </source>
</evidence>
<evidence type="ECO:0000305" key="9"/>
<evidence type="ECO:0007829" key="10">
    <source>
        <dbReference type="PDB" id="2GVL"/>
    </source>
</evidence>
<evidence type="ECO:0007829" key="11">
    <source>
        <dbReference type="PDB" id="2H3B"/>
    </source>
</evidence>
<evidence type="ECO:0007829" key="12">
    <source>
        <dbReference type="PDB" id="2H3D"/>
    </source>
</evidence>
<name>NAMPT_MOUSE</name>
<reference key="1">
    <citation type="journal article" date="2002" name="Eur. J. Immunol.">
        <title>Pre-B-cell colony-enhancing factor, whose expression is up-regulated in activated lymphocytes, is a nicotinamide phosphoribosyltransferase, a cytosolic enzyme involved in NAD biosynthesis.</title>
        <authorList>
            <person name="Rongvaux A."/>
            <person name="Shea R.J."/>
            <person name="Mulks M.H."/>
            <person name="Gigot D."/>
            <person name="Urbain J."/>
            <person name="Leo O."/>
            <person name="Andris F."/>
        </authorList>
    </citation>
    <scope>NUCLEOTIDE SEQUENCE [MRNA]</scope>
    <scope>FUNCTION</scope>
    <scope>INDUCTION</scope>
    <scope>SUBCELLULAR LOCATION</scope>
    <scope>CATALYTIC ACTIVITY</scope>
    <scope>BIOPHYSICOCHEMICAL PROPERTIES</scope>
    <scope>TISSUE SPECIFICITY</scope>
    <source>
        <tissue>T-cell</tissue>
    </source>
</reference>
<reference key="2">
    <citation type="journal article" date="2004" name="J. Biol. Chem.">
        <title>The NAD biosynthesis pathway mediated by nicotinamide phosphoribosyltransferase regulates Sir2 activity in mammalian cells.</title>
        <authorList>
            <person name="Revollo J.R."/>
            <person name="Grimm A.A."/>
            <person name="Imai S."/>
        </authorList>
    </citation>
    <scope>NUCLEOTIDE SEQUENCE [MRNA]</scope>
    <scope>CATALYTIC ACTIVITY</scope>
    <scope>BIOPHYSICOCHEMICAL PROPERTIES</scope>
    <scope>FUNCTION</scope>
    <source>
        <strain>BALB/cJ</strain>
        <tissue>Liver</tissue>
    </source>
</reference>
<reference key="3">
    <citation type="submission" date="2000-02" db="EMBL/GenBank/DDBJ databases">
        <title>Mus musculus pre-B-cell colony-enhancing factor (PBEF) mRNA.</title>
        <authorList>
            <person name="Samal B.B."/>
            <person name="Sun N."/>
            <person name="Sun Y."/>
        </authorList>
    </citation>
    <scope>NUCLEOTIDE SEQUENCE [MRNA]</scope>
</reference>
<reference key="4">
    <citation type="journal article" date="2004" name="Genome Res.">
        <title>The status, quality, and expansion of the NIH full-length cDNA project: the Mammalian Gene Collection (MGC).</title>
        <authorList>
            <consortium name="The MGC Project Team"/>
        </authorList>
    </citation>
    <scope>NUCLEOTIDE SEQUENCE [LARGE SCALE MRNA]</scope>
    <source>
        <strain>Czech II</strain>
        <strain>FVB/N</strain>
        <tissue>Mammary tumor</tissue>
    </source>
</reference>
<reference key="5">
    <citation type="journal article" date="2005" name="Science">
        <title>The transcriptional landscape of the mammalian genome.</title>
        <authorList>
            <person name="Carninci P."/>
            <person name="Kasukawa T."/>
            <person name="Katayama S."/>
            <person name="Gough J."/>
            <person name="Frith M.C."/>
            <person name="Maeda N."/>
            <person name="Oyama R."/>
            <person name="Ravasi T."/>
            <person name="Lenhard B."/>
            <person name="Wells C."/>
            <person name="Kodzius R."/>
            <person name="Shimokawa K."/>
            <person name="Bajic V.B."/>
            <person name="Brenner S.E."/>
            <person name="Batalov S."/>
            <person name="Forrest A.R."/>
            <person name="Zavolan M."/>
            <person name="Davis M.J."/>
            <person name="Wilming L.G."/>
            <person name="Aidinis V."/>
            <person name="Allen J.E."/>
            <person name="Ambesi-Impiombato A."/>
            <person name="Apweiler R."/>
            <person name="Aturaliya R.N."/>
            <person name="Bailey T.L."/>
            <person name="Bansal M."/>
            <person name="Baxter L."/>
            <person name="Beisel K.W."/>
            <person name="Bersano T."/>
            <person name="Bono H."/>
            <person name="Chalk A.M."/>
            <person name="Chiu K.P."/>
            <person name="Choudhary V."/>
            <person name="Christoffels A."/>
            <person name="Clutterbuck D.R."/>
            <person name="Crowe M.L."/>
            <person name="Dalla E."/>
            <person name="Dalrymple B.P."/>
            <person name="de Bono B."/>
            <person name="Della Gatta G."/>
            <person name="di Bernardo D."/>
            <person name="Down T."/>
            <person name="Engstrom P."/>
            <person name="Fagiolini M."/>
            <person name="Faulkner G."/>
            <person name="Fletcher C.F."/>
            <person name="Fukushima T."/>
            <person name="Furuno M."/>
            <person name="Futaki S."/>
            <person name="Gariboldi M."/>
            <person name="Georgii-Hemming P."/>
            <person name="Gingeras T.R."/>
            <person name="Gojobori T."/>
            <person name="Green R.E."/>
            <person name="Gustincich S."/>
            <person name="Harbers M."/>
            <person name="Hayashi Y."/>
            <person name="Hensch T.K."/>
            <person name="Hirokawa N."/>
            <person name="Hill D."/>
            <person name="Huminiecki L."/>
            <person name="Iacono M."/>
            <person name="Ikeo K."/>
            <person name="Iwama A."/>
            <person name="Ishikawa T."/>
            <person name="Jakt M."/>
            <person name="Kanapin A."/>
            <person name="Katoh M."/>
            <person name="Kawasawa Y."/>
            <person name="Kelso J."/>
            <person name="Kitamura H."/>
            <person name="Kitano H."/>
            <person name="Kollias G."/>
            <person name="Krishnan S.P."/>
            <person name="Kruger A."/>
            <person name="Kummerfeld S.K."/>
            <person name="Kurochkin I.V."/>
            <person name="Lareau L.F."/>
            <person name="Lazarevic D."/>
            <person name="Lipovich L."/>
            <person name="Liu J."/>
            <person name="Liuni S."/>
            <person name="McWilliam S."/>
            <person name="Madan Babu M."/>
            <person name="Madera M."/>
            <person name="Marchionni L."/>
            <person name="Matsuda H."/>
            <person name="Matsuzawa S."/>
            <person name="Miki H."/>
            <person name="Mignone F."/>
            <person name="Miyake S."/>
            <person name="Morris K."/>
            <person name="Mottagui-Tabar S."/>
            <person name="Mulder N."/>
            <person name="Nakano N."/>
            <person name="Nakauchi H."/>
            <person name="Ng P."/>
            <person name="Nilsson R."/>
            <person name="Nishiguchi S."/>
            <person name="Nishikawa S."/>
            <person name="Nori F."/>
            <person name="Ohara O."/>
            <person name="Okazaki Y."/>
            <person name="Orlando V."/>
            <person name="Pang K.C."/>
            <person name="Pavan W.J."/>
            <person name="Pavesi G."/>
            <person name="Pesole G."/>
            <person name="Petrovsky N."/>
            <person name="Piazza S."/>
            <person name="Reed J."/>
            <person name="Reid J.F."/>
            <person name="Ring B.Z."/>
            <person name="Ringwald M."/>
            <person name="Rost B."/>
            <person name="Ruan Y."/>
            <person name="Salzberg S.L."/>
            <person name="Sandelin A."/>
            <person name="Schneider C."/>
            <person name="Schoenbach C."/>
            <person name="Sekiguchi K."/>
            <person name="Semple C.A."/>
            <person name="Seno S."/>
            <person name="Sessa L."/>
            <person name="Sheng Y."/>
            <person name="Shibata Y."/>
            <person name="Shimada H."/>
            <person name="Shimada K."/>
            <person name="Silva D."/>
            <person name="Sinclair B."/>
            <person name="Sperling S."/>
            <person name="Stupka E."/>
            <person name="Sugiura K."/>
            <person name="Sultana R."/>
            <person name="Takenaka Y."/>
            <person name="Taki K."/>
            <person name="Tammoja K."/>
            <person name="Tan S.L."/>
            <person name="Tang S."/>
            <person name="Taylor M.S."/>
            <person name="Tegner J."/>
            <person name="Teichmann S.A."/>
            <person name="Ueda H.R."/>
            <person name="van Nimwegen E."/>
            <person name="Verardo R."/>
            <person name="Wei C.L."/>
            <person name="Yagi K."/>
            <person name="Yamanishi H."/>
            <person name="Zabarovsky E."/>
            <person name="Zhu S."/>
            <person name="Zimmer A."/>
            <person name="Hide W."/>
            <person name="Bult C."/>
            <person name="Grimmond S.M."/>
            <person name="Teasdale R.D."/>
            <person name="Liu E.T."/>
            <person name="Brusic V."/>
            <person name="Quackenbush J."/>
            <person name="Wahlestedt C."/>
            <person name="Mattick J.S."/>
            <person name="Hume D.A."/>
            <person name="Kai C."/>
            <person name="Sasaki D."/>
            <person name="Tomaru Y."/>
            <person name="Fukuda S."/>
            <person name="Kanamori-Katayama M."/>
            <person name="Suzuki M."/>
            <person name="Aoki J."/>
            <person name="Arakawa T."/>
            <person name="Iida J."/>
            <person name="Imamura K."/>
            <person name="Itoh M."/>
            <person name="Kato T."/>
            <person name="Kawaji H."/>
            <person name="Kawagashira N."/>
            <person name="Kawashima T."/>
            <person name="Kojima M."/>
            <person name="Kondo S."/>
            <person name="Konno H."/>
            <person name="Nakano K."/>
            <person name="Ninomiya N."/>
            <person name="Nishio T."/>
            <person name="Okada M."/>
            <person name="Plessy C."/>
            <person name="Shibata K."/>
            <person name="Shiraki T."/>
            <person name="Suzuki S."/>
            <person name="Tagami M."/>
            <person name="Waki K."/>
            <person name="Watahiki A."/>
            <person name="Okamura-Oho Y."/>
            <person name="Suzuki H."/>
            <person name="Kawai J."/>
            <person name="Hayashizaki Y."/>
        </authorList>
    </citation>
    <scope>NUCLEOTIDE SEQUENCE [LARGE SCALE MRNA] OF 1-368</scope>
    <source>
        <strain>C57BL/6J</strain>
        <tissue>Head</tissue>
    </source>
</reference>
<reference key="6">
    <citation type="journal article" date="2009" name="Science">
        <title>Circadian clock feedback cycle through NAMPT-mediated NAD+ biosynthesis.</title>
        <authorList>
            <person name="Ramsey K.M."/>
            <person name="Yoshino J."/>
            <person name="Brace C.S."/>
            <person name="Abrassart D."/>
            <person name="Kobayashi Y."/>
            <person name="Marcheva B."/>
            <person name="Hong H.K."/>
            <person name="Chong J.L."/>
            <person name="Buhr E.D."/>
            <person name="Lee C."/>
            <person name="Takahashi J.S."/>
            <person name="Imai S."/>
            <person name="Bass J."/>
        </authorList>
    </citation>
    <scope>FUNCTION</scope>
    <scope>INDUCTION</scope>
</reference>
<reference key="7">
    <citation type="journal article" date="2009" name="Science">
        <title>Circadian control of the NAD+ salvage pathway by CLOCK-SIRT1.</title>
        <authorList>
            <person name="Nakahata Y."/>
            <person name="Sahar S."/>
            <person name="Astarita G."/>
            <person name="Kaluzova M."/>
            <person name="Sassone-Corsi P."/>
        </authorList>
    </citation>
    <scope>FUNCTION</scope>
</reference>
<reference key="8">
    <citation type="journal article" date="2010" name="Cell">
        <title>A tissue-specific atlas of mouse protein phosphorylation and expression.</title>
        <authorList>
            <person name="Huttlin E.L."/>
            <person name="Jedrychowski M.P."/>
            <person name="Elias J.E."/>
            <person name="Goswami T."/>
            <person name="Rad R."/>
            <person name="Beausoleil S.A."/>
            <person name="Villen J."/>
            <person name="Haas W."/>
            <person name="Sowa M.E."/>
            <person name="Gygi S.P."/>
        </authorList>
    </citation>
    <scope>IDENTIFICATION BY MASS SPECTROMETRY [LARGE SCALE ANALYSIS]</scope>
    <source>
        <tissue>Brain</tissue>
        <tissue>Brown adipose tissue</tissue>
        <tissue>Heart</tissue>
        <tissue>Kidney</tissue>
        <tissue>Liver</tissue>
        <tissue>Lung</tissue>
        <tissue>Pancreas</tissue>
        <tissue>Spleen</tissue>
        <tissue>Testis</tissue>
    </source>
</reference>
<reference key="9">
    <citation type="journal article" date="2006" name="Nat. Struct. Mol. Biol.">
        <title>Molecular basis for the inhibition of human NMPRTase, a novel target for anticancer agents.</title>
        <authorList>
            <person name="Khan J.A."/>
            <person name="Tao X."/>
            <person name="Tong L."/>
        </authorList>
    </citation>
    <scope>X-RAY CRYSTALLOGRAPHY (2.1 ANGSTROMS)</scope>
    <scope>SUBUNIT</scope>
</reference>
<reference key="10">
    <citation type="journal article" date="2006" name="Nat. Struct. Mol. Biol.">
        <title>Structure of Nampt/PBEF/visfatin, a mammalian NAD+ biosynthetic enzyme.</title>
        <authorList>
            <person name="Wang T."/>
            <person name="Zhang X."/>
            <person name="Bheda P."/>
            <person name="Revollo J.R."/>
            <person name="Imai S."/>
            <person name="Wolberger C."/>
        </authorList>
    </citation>
    <scope>X-RAY CRYSTALLOGRAPHY (1.95 ANGSTROMS) IN COMPLEX WITH NICOTINAMIDE MONONUCLEOTIDE</scope>
    <scope>SUBUNIT</scope>
</reference>
<feature type="chain" id="PRO_0000205864" description="Nicotinamide phosphoribosyltransferase">
    <location>
        <begin position="1"/>
        <end position="491"/>
    </location>
</feature>
<feature type="binding site" evidence="1">
    <location>
        <position position="196"/>
    </location>
    <ligand>
        <name>diphosphate</name>
        <dbReference type="ChEBI" id="CHEBI:33019"/>
    </ligand>
</feature>
<feature type="binding site">
    <location>
        <position position="219"/>
    </location>
    <ligand>
        <name>beta-nicotinamide D-ribonucleotide</name>
        <dbReference type="ChEBI" id="CHEBI:14649"/>
    </ligand>
</feature>
<feature type="binding site" evidence="1">
    <location>
        <position position="247"/>
    </location>
    <ligand>
        <name>diphosphate</name>
        <dbReference type="ChEBI" id="CHEBI:33019"/>
    </ligand>
</feature>
<feature type="binding site">
    <location>
        <begin position="311"/>
        <end position="313"/>
    </location>
    <ligand>
        <name>beta-nicotinamide D-ribonucleotide</name>
        <dbReference type="ChEBI" id="CHEBI:14649"/>
    </ligand>
</feature>
<feature type="binding site" evidence="1">
    <location>
        <position position="311"/>
    </location>
    <ligand>
        <name>diphosphate</name>
        <dbReference type="ChEBI" id="CHEBI:33019"/>
    </ligand>
</feature>
<feature type="binding site">
    <location>
        <begin position="353"/>
        <end position="354"/>
    </location>
    <ligand>
        <name>beta-nicotinamide D-ribonucleotide</name>
        <dbReference type="ChEBI" id="CHEBI:14649"/>
    </ligand>
</feature>
<feature type="binding site">
    <location>
        <position position="384"/>
    </location>
    <ligand>
        <name>beta-nicotinamide D-ribonucleotide</name>
        <dbReference type="ChEBI" id="CHEBI:14649"/>
    </ligand>
</feature>
<feature type="binding site">
    <location>
        <position position="392"/>
    </location>
    <ligand>
        <name>beta-nicotinamide D-ribonucleotide</name>
        <dbReference type="ChEBI" id="CHEBI:14649"/>
    </ligand>
</feature>
<feature type="modified residue" description="N-acetylmethionine" evidence="2">
    <location>
        <position position="1"/>
    </location>
</feature>
<feature type="modified residue" description="Phosphotyrosine" evidence="2">
    <location>
        <position position="188"/>
    </location>
</feature>
<feature type="modified residue" description="Phosphoserine" evidence="2">
    <location>
        <position position="472"/>
    </location>
</feature>
<feature type="sequence conflict" description="In Ref. 3; AAF43208." evidence="9" ref="3">
    <original>K</original>
    <variation>R</variation>
    <location>
        <position position="170"/>
    </location>
</feature>
<feature type="sequence conflict" description="In Ref. 3; AAF43208." evidence="9" ref="3">
    <original>F</original>
    <variation>S</variation>
    <location>
        <position position="193"/>
    </location>
</feature>
<feature type="sequence conflict" description="In Ref. 3; AAF43208." evidence="9" ref="3">
    <original>F</original>
    <variation>L</variation>
    <location>
        <position position="215"/>
    </location>
</feature>
<feature type="helix" evidence="11">
    <location>
        <begin position="11"/>
        <end position="13"/>
    </location>
</feature>
<feature type="strand" evidence="12">
    <location>
        <begin position="14"/>
        <end position="16"/>
    </location>
</feature>
<feature type="helix" evidence="11">
    <location>
        <begin position="17"/>
        <end position="24"/>
    </location>
</feature>
<feature type="strand" evidence="11">
    <location>
        <begin position="30"/>
        <end position="39"/>
    </location>
</feature>
<feature type="strand" evidence="11">
    <location>
        <begin position="56"/>
        <end position="59"/>
    </location>
</feature>
<feature type="helix" evidence="11">
    <location>
        <begin position="62"/>
        <end position="69"/>
    </location>
</feature>
<feature type="helix" evidence="11">
    <location>
        <begin position="77"/>
        <end position="91"/>
    </location>
</feature>
<feature type="helix" evidence="11">
    <location>
        <begin position="98"/>
        <end position="108"/>
    </location>
</feature>
<feature type="strand" evidence="11">
    <location>
        <begin position="114"/>
        <end position="118"/>
    </location>
</feature>
<feature type="strand" evidence="11">
    <location>
        <begin position="123"/>
        <end position="126"/>
    </location>
</feature>
<feature type="strand" evidence="11">
    <location>
        <begin position="129"/>
        <end position="138"/>
    </location>
</feature>
<feature type="helix" evidence="11">
    <location>
        <begin position="139"/>
        <end position="143"/>
    </location>
</feature>
<feature type="helix" evidence="11">
    <location>
        <begin position="144"/>
        <end position="147"/>
    </location>
</feature>
<feature type="helix" evidence="11">
    <location>
        <begin position="149"/>
        <end position="153"/>
    </location>
</feature>
<feature type="helix" evidence="11">
    <location>
        <begin position="156"/>
        <end position="180"/>
    </location>
</feature>
<feature type="helix" evidence="11">
    <location>
        <begin position="186"/>
        <end position="188"/>
    </location>
</feature>
<feature type="strand" evidence="11">
    <location>
        <begin position="189"/>
        <end position="192"/>
    </location>
</feature>
<feature type="turn" evidence="11">
    <location>
        <begin position="195"/>
        <end position="197"/>
    </location>
</feature>
<feature type="helix" evidence="11">
    <location>
        <begin position="201"/>
        <end position="211"/>
    </location>
</feature>
<feature type="turn" evidence="11">
    <location>
        <begin position="212"/>
        <end position="214"/>
    </location>
</feature>
<feature type="strand" evidence="11">
    <location>
        <begin position="216"/>
        <end position="219"/>
    </location>
</feature>
<feature type="helix" evidence="11">
    <location>
        <begin position="222"/>
        <end position="230"/>
    </location>
</feature>
<feature type="strand" evidence="12">
    <location>
        <begin position="234"/>
        <end position="236"/>
    </location>
</feature>
<feature type="strand" evidence="11">
    <location>
        <begin position="238"/>
        <end position="240"/>
    </location>
</feature>
<feature type="helix" evidence="11">
    <location>
        <begin position="247"/>
        <end position="251"/>
    </location>
</feature>
<feature type="helix" evidence="11">
    <location>
        <begin position="255"/>
        <end position="257"/>
    </location>
</feature>
<feature type="helix" evidence="11">
    <location>
        <begin position="258"/>
        <end position="268"/>
    </location>
</feature>
<feature type="strand" evidence="11">
    <location>
        <begin position="270"/>
        <end position="272"/>
    </location>
</feature>
<feature type="strand" evidence="11">
    <location>
        <begin position="274"/>
        <end position="277"/>
    </location>
</feature>
<feature type="helix" evidence="11">
    <location>
        <begin position="283"/>
        <end position="288"/>
    </location>
</feature>
<feature type="helix" evidence="11">
    <location>
        <begin position="289"/>
        <end position="294"/>
    </location>
</feature>
<feature type="helix" evidence="11">
    <location>
        <begin position="296"/>
        <end position="299"/>
    </location>
</feature>
<feature type="strand" evidence="11">
    <location>
        <begin position="308"/>
        <end position="311"/>
    </location>
</feature>
<feature type="helix" evidence="11">
    <location>
        <begin position="317"/>
        <end position="331"/>
    </location>
</feature>
<feature type="strand" evidence="11">
    <location>
        <begin position="348"/>
        <end position="352"/>
    </location>
</feature>
<feature type="helix" evidence="11">
    <location>
        <begin position="358"/>
        <end position="370"/>
    </location>
</feature>
<feature type="helix" evidence="11">
    <location>
        <begin position="375"/>
        <end position="377"/>
    </location>
</feature>
<feature type="strand" evidence="11">
    <location>
        <begin position="378"/>
        <end position="383"/>
    </location>
</feature>
<feature type="helix" evidence="11">
    <location>
        <begin position="384"/>
        <end position="387"/>
    </location>
</feature>
<feature type="turn" evidence="11">
    <location>
        <begin position="392"/>
        <end position="396"/>
    </location>
</feature>
<feature type="strand" evidence="11">
    <location>
        <begin position="397"/>
        <end position="406"/>
    </location>
</feature>
<feature type="strand" evidence="11">
    <location>
        <begin position="409"/>
        <end position="412"/>
    </location>
</feature>
<feature type="helix" evidence="11">
    <location>
        <begin position="421"/>
        <end position="423"/>
    </location>
</feature>
<feature type="strand" evidence="11">
    <location>
        <begin position="431"/>
        <end position="434"/>
    </location>
</feature>
<feature type="strand" evidence="11">
    <location>
        <begin position="440"/>
        <end position="443"/>
    </location>
</feature>
<feature type="helix" evidence="11">
    <location>
        <begin position="447"/>
        <end position="450"/>
    </location>
</feature>
<feature type="strand" evidence="10">
    <location>
        <begin position="452"/>
        <end position="454"/>
    </location>
</feature>
<feature type="strand" evidence="11">
    <location>
        <begin position="459"/>
        <end position="463"/>
    </location>
</feature>
<feature type="helix" evidence="11">
    <location>
        <begin position="473"/>
        <end position="479"/>
    </location>
</feature>